<name>GUAA_MALP2</name>
<accession>Q8EWS9</accession>
<feature type="chain" id="PRO_0000140148" description="GMP synthase [glutamine-hydrolyzing]">
    <location>
        <begin position="1"/>
        <end position="511"/>
    </location>
</feature>
<feature type="domain" description="Glutamine amidotransferase type-1" evidence="1">
    <location>
        <begin position="3"/>
        <end position="193"/>
    </location>
</feature>
<feature type="domain" description="GMPS ATP-PPase" evidence="1">
    <location>
        <begin position="194"/>
        <end position="384"/>
    </location>
</feature>
<feature type="active site" description="Nucleophile" evidence="1">
    <location>
        <position position="80"/>
    </location>
</feature>
<feature type="active site" evidence="1">
    <location>
        <position position="167"/>
    </location>
</feature>
<feature type="active site" evidence="1">
    <location>
        <position position="169"/>
    </location>
</feature>
<feature type="binding site" evidence="1">
    <location>
        <begin position="221"/>
        <end position="227"/>
    </location>
    <ligand>
        <name>ATP</name>
        <dbReference type="ChEBI" id="CHEBI:30616"/>
    </ligand>
</feature>
<reference key="1">
    <citation type="journal article" date="2002" name="Nucleic Acids Res.">
        <title>The complete genomic sequence of Mycoplasma penetrans, an intracellular bacterial pathogen in humans.</title>
        <authorList>
            <person name="Sasaki Y."/>
            <person name="Ishikawa J."/>
            <person name="Yamashita A."/>
            <person name="Oshima K."/>
            <person name="Kenri T."/>
            <person name="Furuya K."/>
            <person name="Yoshino C."/>
            <person name="Horino A."/>
            <person name="Shiba T."/>
            <person name="Sasaki T."/>
            <person name="Hattori M."/>
        </authorList>
    </citation>
    <scope>NUCLEOTIDE SEQUENCE [LARGE SCALE GENOMIC DNA]</scope>
    <source>
        <strain>HF-2</strain>
    </source>
</reference>
<comment type="function">
    <text evidence="1">Catalyzes the synthesis of GMP from XMP.</text>
</comment>
<comment type="catalytic activity">
    <reaction evidence="1">
        <text>XMP + L-glutamine + ATP + H2O = GMP + L-glutamate + AMP + diphosphate + 2 H(+)</text>
        <dbReference type="Rhea" id="RHEA:11680"/>
        <dbReference type="ChEBI" id="CHEBI:15377"/>
        <dbReference type="ChEBI" id="CHEBI:15378"/>
        <dbReference type="ChEBI" id="CHEBI:29985"/>
        <dbReference type="ChEBI" id="CHEBI:30616"/>
        <dbReference type="ChEBI" id="CHEBI:33019"/>
        <dbReference type="ChEBI" id="CHEBI:57464"/>
        <dbReference type="ChEBI" id="CHEBI:58115"/>
        <dbReference type="ChEBI" id="CHEBI:58359"/>
        <dbReference type="ChEBI" id="CHEBI:456215"/>
        <dbReference type="EC" id="6.3.5.2"/>
    </reaction>
</comment>
<comment type="pathway">
    <text evidence="1">Purine metabolism; GMP biosynthesis; GMP from XMP (L-Gln route): step 1/1.</text>
</comment>
<comment type="subunit">
    <text evidence="1">Homodimer.</text>
</comment>
<keyword id="KW-0067">ATP-binding</keyword>
<keyword id="KW-0315">Glutamine amidotransferase</keyword>
<keyword id="KW-0332">GMP biosynthesis</keyword>
<keyword id="KW-0436">Ligase</keyword>
<keyword id="KW-0547">Nucleotide-binding</keyword>
<keyword id="KW-0658">Purine biosynthesis</keyword>
<keyword id="KW-1185">Reference proteome</keyword>
<dbReference type="EC" id="6.3.5.2" evidence="1"/>
<dbReference type="EMBL" id="BA000026">
    <property type="protein sequence ID" value="BAC43914.1"/>
    <property type="molecule type" value="Genomic_DNA"/>
</dbReference>
<dbReference type="RefSeq" id="WP_011076950.1">
    <property type="nucleotide sequence ID" value="NC_004432.1"/>
</dbReference>
<dbReference type="SMR" id="Q8EWS9"/>
<dbReference type="FunCoup" id="Q8EWS9">
    <property type="interactions" value="257"/>
</dbReference>
<dbReference type="STRING" id="272633.gene:10731216"/>
<dbReference type="KEGG" id="mpe:MYPE1220"/>
<dbReference type="eggNOG" id="COG0519">
    <property type="taxonomic scope" value="Bacteria"/>
</dbReference>
<dbReference type="HOGENOM" id="CLU_014340_0_5_14"/>
<dbReference type="InParanoid" id="Q8EWS9"/>
<dbReference type="UniPathway" id="UPA00189">
    <property type="reaction ID" value="UER00296"/>
</dbReference>
<dbReference type="Proteomes" id="UP000002522">
    <property type="component" value="Chromosome"/>
</dbReference>
<dbReference type="GO" id="GO:0005829">
    <property type="term" value="C:cytosol"/>
    <property type="evidence" value="ECO:0007669"/>
    <property type="project" value="TreeGrafter"/>
</dbReference>
<dbReference type="GO" id="GO:0005524">
    <property type="term" value="F:ATP binding"/>
    <property type="evidence" value="ECO:0007669"/>
    <property type="project" value="UniProtKB-UniRule"/>
</dbReference>
<dbReference type="GO" id="GO:0003921">
    <property type="term" value="F:GMP synthase activity"/>
    <property type="evidence" value="ECO:0007669"/>
    <property type="project" value="InterPro"/>
</dbReference>
<dbReference type="CDD" id="cd01742">
    <property type="entry name" value="GATase1_GMP_Synthase"/>
    <property type="match status" value="1"/>
</dbReference>
<dbReference type="CDD" id="cd01997">
    <property type="entry name" value="GMP_synthase_C"/>
    <property type="match status" value="1"/>
</dbReference>
<dbReference type="FunFam" id="3.30.300.10:FF:000002">
    <property type="entry name" value="GMP synthase [glutamine-hydrolyzing]"/>
    <property type="match status" value="1"/>
</dbReference>
<dbReference type="FunFam" id="3.40.50.620:FF:000001">
    <property type="entry name" value="GMP synthase [glutamine-hydrolyzing]"/>
    <property type="match status" value="1"/>
</dbReference>
<dbReference type="FunFam" id="3.40.50.880:FF:000001">
    <property type="entry name" value="GMP synthase [glutamine-hydrolyzing]"/>
    <property type="match status" value="1"/>
</dbReference>
<dbReference type="Gene3D" id="3.30.300.10">
    <property type="match status" value="1"/>
</dbReference>
<dbReference type="Gene3D" id="3.40.50.880">
    <property type="match status" value="1"/>
</dbReference>
<dbReference type="Gene3D" id="3.40.50.620">
    <property type="entry name" value="HUPs"/>
    <property type="match status" value="1"/>
</dbReference>
<dbReference type="HAMAP" id="MF_00344">
    <property type="entry name" value="GMP_synthase"/>
    <property type="match status" value="1"/>
</dbReference>
<dbReference type="InterPro" id="IPR029062">
    <property type="entry name" value="Class_I_gatase-like"/>
</dbReference>
<dbReference type="InterPro" id="IPR017926">
    <property type="entry name" value="GATASE"/>
</dbReference>
<dbReference type="InterPro" id="IPR001674">
    <property type="entry name" value="GMP_synth_C"/>
</dbReference>
<dbReference type="InterPro" id="IPR004739">
    <property type="entry name" value="GMP_synth_GATase"/>
</dbReference>
<dbReference type="InterPro" id="IPR022955">
    <property type="entry name" value="GMP_synthase"/>
</dbReference>
<dbReference type="InterPro" id="IPR025777">
    <property type="entry name" value="GMPS_ATP_PPase_dom"/>
</dbReference>
<dbReference type="InterPro" id="IPR014729">
    <property type="entry name" value="Rossmann-like_a/b/a_fold"/>
</dbReference>
<dbReference type="NCBIfam" id="TIGR00884">
    <property type="entry name" value="guaA_Cterm"/>
    <property type="match status" value="1"/>
</dbReference>
<dbReference type="NCBIfam" id="TIGR00888">
    <property type="entry name" value="guaA_Nterm"/>
    <property type="match status" value="1"/>
</dbReference>
<dbReference type="NCBIfam" id="NF000848">
    <property type="entry name" value="PRK00074.1"/>
    <property type="match status" value="1"/>
</dbReference>
<dbReference type="PANTHER" id="PTHR11922:SF2">
    <property type="entry name" value="GMP SYNTHASE [GLUTAMINE-HYDROLYZING]"/>
    <property type="match status" value="1"/>
</dbReference>
<dbReference type="PANTHER" id="PTHR11922">
    <property type="entry name" value="GMP SYNTHASE-RELATED"/>
    <property type="match status" value="1"/>
</dbReference>
<dbReference type="Pfam" id="PF00117">
    <property type="entry name" value="GATase"/>
    <property type="match status" value="1"/>
</dbReference>
<dbReference type="Pfam" id="PF00958">
    <property type="entry name" value="GMP_synt_C"/>
    <property type="match status" value="1"/>
</dbReference>
<dbReference type="PRINTS" id="PR00096">
    <property type="entry name" value="GATASE"/>
</dbReference>
<dbReference type="SUPFAM" id="SSF52402">
    <property type="entry name" value="Adenine nucleotide alpha hydrolases-like"/>
    <property type="match status" value="1"/>
</dbReference>
<dbReference type="SUPFAM" id="SSF52317">
    <property type="entry name" value="Class I glutamine amidotransferase-like"/>
    <property type="match status" value="1"/>
</dbReference>
<dbReference type="SUPFAM" id="SSF54810">
    <property type="entry name" value="GMP synthetase C-terminal dimerisation domain"/>
    <property type="match status" value="1"/>
</dbReference>
<dbReference type="PROSITE" id="PS51273">
    <property type="entry name" value="GATASE_TYPE_1"/>
    <property type="match status" value="1"/>
</dbReference>
<dbReference type="PROSITE" id="PS51553">
    <property type="entry name" value="GMPS_ATP_PPASE"/>
    <property type="match status" value="1"/>
</dbReference>
<gene>
    <name evidence="1" type="primary">guaA</name>
    <name type="ordered locus">MYPE1220</name>
</gene>
<protein>
    <recommendedName>
        <fullName evidence="1">GMP synthase [glutamine-hydrolyzing]</fullName>
        <ecNumber evidence="1">6.3.5.2</ecNumber>
    </recommendedName>
    <alternativeName>
        <fullName evidence="1">GMP synthetase</fullName>
    </alternativeName>
    <alternativeName>
        <fullName evidence="1">Glutamine amidotransferase</fullName>
    </alternativeName>
</protein>
<proteinExistence type="inferred from homology"/>
<sequence>MDKILILDFGGQYTQLIARRIRDLNVYSEIVDYDISIEEIIKKNPKGIILSGGYDSVYGDRSIKPNKGIWDLNIPILGICYGFQVMMQENGGQVENDKDSEEYGSTDIRLTTNELFENIELDNNCWMSHSDSVIFLPKGFKVIASTNKCLVASACNREKKFYGVQFHPEVTQTTFGNQLLQNFVYSICDVAGDWEPKNIKLEKIEEIKSIVKDDYVLCAISGGVDSLVAAVLTAQAIGDKLYCVFVDHGLLRKNESQEVCALLKKLIGKNIFLVDQKQLFLSKLKGVVDPEQKRKIIGKTFIEVFEKVANKINVPFKYLLQGTIYPDIVESGSKFSKTIKSHHNVGGLPERLQFELLEPLKYLFKDEVRKLGLSLDIPYQNVYRQPFPGPGLAVRVLGEITEDKLEIVREADFLFRSYIDQLYKNSEHKPWQYFTVLTNSKSVGVVGDNRSYGYTLALRAVDSMDAMSAKWYKIPLEHLEKISSIICNKVKNISRVVYDITNKPPGTIEWE</sequence>
<evidence type="ECO:0000255" key="1">
    <source>
        <dbReference type="HAMAP-Rule" id="MF_00344"/>
    </source>
</evidence>
<organism>
    <name type="scientific">Malacoplasma penetrans (strain HF-2)</name>
    <name type="common">Mycoplasma penetrans</name>
    <dbReference type="NCBI Taxonomy" id="272633"/>
    <lineage>
        <taxon>Bacteria</taxon>
        <taxon>Bacillati</taxon>
        <taxon>Mycoplasmatota</taxon>
        <taxon>Mycoplasmoidales</taxon>
        <taxon>Mycoplasmoidaceae</taxon>
        <taxon>Malacoplasma</taxon>
    </lineage>
</organism>